<keyword id="KW-0002">3D-structure</keyword>
<keyword id="KW-0131">Cell cycle</keyword>
<keyword id="KW-0132">Cell division</keyword>
<keyword id="KW-1185">Reference proteome</keyword>
<keyword id="KW-0717">Septation</keyword>
<feature type="chain" id="PRO_0000189017" description="Septum site-determining protein MinC">
    <location>
        <begin position="1"/>
        <end position="226"/>
    </location>
</feature>
<feature type="strand" evidence="3">
    <location>
        <begin position="9"/>
        <end position="12"/>
    </location>
</feature>
<feature type="strand" evidence="3">
    <location>
        <begin position="14"/>
        <end position="22"/>
    </location>
</feature>
<feature type="helix" evidence="3">
    <location>
        <begin position="30"/>
        <end position="42"/>
    </location>
</feature>
<feature type="strand" evidence="3">
    <location>
        <begin position="51"/>
        <end position="56"/>
    </location>
</feature>
<feature type="helix" evidence="3">
    <location>
        <begin position="65"/>
        <end position="76"/>
    </location>
</feature>
<feature type="strand" evidence="3">
    <location>
        <begin position="81"/>
        <end position="86"/>
    </location>
</feature>
<name>MINC_BACSU</name>
<evidence type="ECO:0000250" key="1"/>
<evidence type="ECO:0000305" key="2"/>
<evidence type="ECO:0007829" key="3">
    <source>
        <dbReference type="PDB" id="2M4I"/>
    </source>
</evidence>
<dbReference type="EMBL" id="M95582">
    <property type="protein sequence ID" value="AAA22608.1"/>
    <property type="molecule type" value="Genomic_DNA"/>
</dbReference>
<dbReference type="EMBL" id="Z15113">
    <property type="protein sequence ID" value="CAA78817.1"/>
    <property type="molecule type" value="Genomic_DNA"/>
</dbReference>
<dbReference type="EMBL" id="M96343">
    <property type="protein sequence ID" value="AAA22400.1"/>
    <property type="molecule type" value="Genomic_DNA"/>
</dbReference>
<dbReference type="EMBL" id="AL009126">
    <property type="protein sequence ID" value="CAB14760.1"/>
    <property type="molecule type" value="Genomic_DNA"/>
</dbReference>
<dbReference type="PIR" id="S31204">
    <property type="entry name" value="F45239"/>
</dbReference>
<dbReference type="RefSeq" id="NP_390678.1">
    <property type="nucleotide sequence ID" value="NC_000964.3"/>
</dbReference>
<dbReference type="RefSeq" id="WP_004398901.1">
    <property type="nucleotide sequence ID" value="NZ_OZ025638.1"/>
</dbReference>
<dbReference type="PDB" id="2M4I">
    <property type="method" value="NMR"/>
    <property type="chains" value="A=1-102"/>
</dbReference>
<dbReference type="PDBsum" id="2M4I"/>
<dbReference type="BMRB" id="Q01463"/>
<dbReference type="SMR" id="Q01463"/>
<dbReference type="FunCoup" id="Q01463">
    <property type="interactions" value="43"/>
</dbReference>
<dbReference type="IntAct" id="Q01463">
    <property type="interactions" value="2"/>
</dbReference>
<dbReference type="STRING" id="224308.BSU28000"/>
<dbReference type="PaxDb" id="224308-BSU28000"/>
<dbReference type="DNASU" id="937500"/>
<dbReference type="EnsemblBacteria" id="CAB14760">
    <property type="protein sequence ID" value="CAB14760"/>
    <property type="gene ID" value="BSU_28000"/>
</dbReference>
<dbReference type="GeneID" id="937500"/>
<dbReference type="KEGG" id="bsu:BSU28000"/>
<dbReference type="PATRIC" id="fig|224308.179.peg.3042"/>
<dbReference type="eggNOG" id="COG0850">
    <property type="taxonomic scope" value="Bacteria"/>
</dbReference>
<dbReference type="InParanoid" id="Q01463"/>
<dbReference type="OrthoDB" id="9790810at2"/>
<dbReference type="PhylomeDB" id="Q01463"/>
<dbReference type="BioCyc" id="BSUB:BSU28000-MONOMER"/>
<dbReference type="EvolutionaryTrace" id="Q01463"/>
<dbReference type="Proteomes" id="UP000001570">
    <property type="component" value="Chromosome"/>
</dbReference>
<dbReference type="GO" id="GO:0000902">
    <property type="term" value="P:cell morphogenesis"/>
    <property type="evidence" value="ECO:0007669"/>
    <property type="project" value="InterPro"/>
</dbReference>
<dbReference type="GO" id="GO:0000917">
    <property type="term" value="P:division septum assembly"/>
    <property type="evidence" value="ECO:0007669"/>
    <property type="project" value="UniProtKB-KW"/>
</dbReference>
<dbReference type="GO" id="GO:0032272">
    <property type="term" value="P:negative regulation of protein polymerization"/>
    <property type="evidence" value="ECO:0000314"/>
    <property type="project" value="CACAO"/>
</dbReference>
<dbReference type="GO" id="GO:1901891">
    <property type="term" value="P:regulation of cell septum assembly"/>
    <property type="evidence" value="ECO:0007669"/>
    <property type="project" value="InterPro"/>
</dbReference>
<dbReference type="FunFam" id="2.160.20.70:FF:000003">
    <property type="entry name" value="Probable septum site-determining protein MinC"/>
    <property type="match status" value="1"/>
</dbReference>
<dbReference type="Gene3D" id="2.160.20.70">
    <property type="match status" value="1"/>
</dbReference>
<dbReference type="Gene3D" id="3.30.160.540">
    <property type="match status" value="1"/>
</dbReference>
<dbReference type="HAMAP" id="MF_00267">
    <property type="entry name" value="MinC"/>
    <property type="match status" value="1"/>
</dbReference>
<dbReference type="InterPro" id="IPR016098">
    <property type="entry name" value="CAP/MinC_C"/>
</dbReference>
<dbReference type="InterPro" id="IPR013033">
    <property type="entry name" value="MinC"/>
</dbReference>
<dbReference type="InterPro" id="IPR036145">
    <property type="entry name" value="MinC_C_sf"/>
</dbReference>
<dbReference type="InterPro" id="IPR055219">
    <property type="entry name" value="MinC_N_1"/>
</dbReference>
<dbReference type="InterPro" id="IPR005526">
    <property type="entry name" value="Septum_form_inhib_MinC_C"/>
</dbReference>
<dbReference type="NCBIfam" id="TIGR01222">
    <property type="entry name" value="minC"/>
    <property type="match status" value="1"/>
</dbReference>
<dbReference type="PANTHER" id="PTHR34108">
    <property type="entry name" value="SEPTUM SITE-DETERMINING PROTEIN MINC"/>
    <property type="match status" value="1"/>
</dbReference>
<dbReference type="PANTHER" id="PTHR34108:SF1">
    <property type="entry name" value="SEPTUM SITE-DETERMINING PROTEIN MINC"/>
    <property type="match status" value="1"/>
</dbReference>
<dbReference type="Pfam" id="PF03775">
    <property type="entry name" value="MinC_C"/>
    <property type="match status" value="1"/>
</dbReference>
<dbReference type="Pfam" id="PF22642">
    <property type="entry name" value="MinC_N_1"/>
    <property type="match status" value="1"/>
</dbReference>
<dbReference type="SUPFAM" id="SSF63848">
    <property type="entry name" value="Cell-division inhibitor MinC, C-terminal domain"/>
    <property type="match status" value="1"/>
</dbReference>
<proteinExistence type="evidence at protein level"/>
<reference key="1">
    <citation type="journal article" date="1992" name="J. Bacteriol.">
        <title>The divIVB region of the Bacillus subtilis chromosome encodes homologs of Escherichia coli septum placement (minCD) and cell shape (mreBCD) determinants.</title>
        <authorList>
            <person name="Varley A.W."/>
            <person name="Stewart G.C."/>
        </authorList>
    </citation>
    <scope>NUCLEOTIDE SEQUENCE [GENOMIC DNA]</scope>
    <source>
        <strain>168</strain>
    </source>
</reference>
<reference key="2">
    <citation type="journal article" date="1993" name="Mol. Microbiol.">
        <title>The minCD locus of Bacillus subtilis lacks the minE determinant that provides topological specificity to cell division.</title>
        <authorList>
            <person name="Lee S."/>
            <person name="Price C.W."/>
        </authorList>
    </citation>
    <scope>NUCLEOTIDE SEQUENCE [GENOMIC DNA]</scope>
    <source>
        <strain>168</strain>
    </source>
</reference>
<reference key="3">
    <citation type="journal article" date="1992" name="J. Bacteriol.">
        <title>Identification of Bacillus subtilis genes for septum placement and shape determination.</title>
        <authorList>
            <person name="Levin P.A."/>
            <person name="Margolis P.S."/>
            <person name="Setlow P."/>
            <person name="Losick R."/>
            <person name="Sun D."/>
        </authorList>
    </citation>
    <scope>NUCLEOTIDE SEQUENCE [GENOMIC DNA]</scope>
</reference>
<reference key="4">
    <citation type="journal article" date="1997" name="Nature">
        <title>The complete genome sequence of the Gram-positive bacterium Bacillus subtilis.</title>
        <authorList>
            <person name="Kunst F."/>
            <person name="Ogasawara N."/>
            <person name="Moszer I."/>
            <person name="Albertini A.M."/>
            <person name="Alloni G."/>
            <person name="Azevedo V."/>
            <person name="Bertero M.G."/>
            <person name="Bessieres P."/>
            <person name="Bolotin A."/>
            <person name="Borchert S."/>
            <person name="Borriss R."/>
            <person name="Boursier L."/>
            <person name="Brans A."/>
            <person name="Braun M."/>
            <person name="Brignell S.C."/>
            <person name="Bron S."/>
            <person name="Brouillet S."/>
            <person name="Bruschi C.V."/>
            <person name="Caldwell B."/>
            <person name="Capuano V."/>
            <person name="Carter N.M."/>
            <person name="Choi S.-K."/>
            <person name="Codani J.-J."/>
            <person name="Connerton I.F."/>
            <person name="Cummings N.J."/>
            <person name="Daniel R.A."/>
            <person name="Denizot F."/>
            <person name="Devine K.M."/>
            <person name="Duesterhoeft A."/>
            <person name="Ehrlich S.D."/>
            <person name="Emmerson P.T."/>
            <person name="Entian K.-D."/>
            <person name="Errington J."/>
            <person name="Fabret C."/>
            <person name="Ferrari E."/>
            <person name="Foulger D."/>
            <person name="Fritz C."/>
            <person name="Fujita M."/>
            <person name="Fujita Y."/>
            <person name="Fuma S."/>
            <person name="Galizzi A."/>
            <person name="Galleron N."/>
            <person name="Ghim S.-Y."/>
            <person name="Glaser P."/>
            <person name="Goffeau A."/>
            <person name="Golightly E.J."/>
            <person name="Grandi G."/>
            <person name="Guiseppi G."/>
            <person name="Guy B.J."/>
            <person name="Haga K."/>
            <person name="Haiech J."/>
            <person name="Harwood C.R."/>
            <person name="Henaut A."/>
            <person name="Hilbert H."/>
            <person name="Holsappel S."/>
            <person name="Hosono S."/>
            <person name="Hullo M.-F."/>
            <person name="Itaya M."/>
            <person name="Jones L.-M."/>
            <person name="Joris B."/>
            <person name="Karamata D."/>
            <person name="Kasahara Y."/>
            <person name="Klaerr-Blanchard M."/>
            <person name="Klein C."/>
            <person name="Kobayashi Y."/>
            <person name="Koetter P."/>
            <person name="Koningstein G."/>
            <person name="Krogh S."/>
            <person name="Kumano M."/>
            <person name="Kurita K."/>
            <person name="Lapidus A."/>
            <person name="Lardinois S."/>
            <person name="Lauber J."/>
            <person name="Lazarevic V."/>
            <person name="Lee S.-M."/>
            <person name="Levine A."/>
            <person name="Liu H."/>
            <person name="Masuda S."/>
            <person name="Mauel C."/>
            <person name="Medigue C."/>
            <person name="Medina N."/>
            <person name="Mellado R.P."/>
            <person name="Mizuno M."/>
            <person name="Moestl D."/>
            <person name="Nakai S."/>
            <person name="Noback M."/>
            <person name="Noone D."/>
            <person name="O'Reilly M."/>
            <person name="Ogawa K."/>
            <person name="Ogiwara A."/>
            <person name="Oudega B."/>
            <person name="Park S.-H."/>
            <person name="Parro V."/>
            <person name="Pohl T.M."/>
            <person name="Portetelle D."/>
            <person name="Porwollik S."/>
            <person name="Prescott A.M."/>
            <person name="Presecan E."/>
            <person name="Pujic P."/>
            <person name="Purnelle B."/>
            <person name="Rapoport G."/>
            <person name="Rey M."/>
            <person name="Reynolds S."/>
            <person name="Rieger M."/>
            <person name="Rivolta C."/>
            <person name="Rocha E."/>
            <person name="Roche B."/>
            <person name="Rose M."/>
            <person name="Sadaie Y."/>
            <person name="Sato T."/>
            <person name="Scanlan E."/>
            <person name="Schleich S."/>
            <person name="Schroeter R."/>
            <person name="Scoffone F."/>
            <person name="Sekiguchi J."/>
            <person name="Sekowska A."/>
            <person name="Seror S.J."/>
            <person name="Serror P."/>
            <person name="Shin B.-S."/>
            <person name="Soldo B."/>
            <person name="Sorokin A."/>
            <person name="Tacconi E."/>
            <person name="Takagi T."/>
            <person name="Takahashi H."/>
            <person name="Takemaru K."/>
            <person name="Takeuchi M."/>
            <person name="Tamakoshi A."/>
            <person name="Tanaka T."/>
            <person name="Terpstra P."/>
            <person name="Tognoni A."/>
            <person name="Tosato V."/>
            <person name="Uchiyama S."/>
            <person name="Vandenbol M."/>
            <person name="Vannier F."/>
            <person name="Vassarotti A."/>
            <person name="Viari A."/>
            <person name="Wambutt R."/>
            <person name="Wedler E."/>
            <person name="Wedler H."/>
            <person name="Weitzenegger T."/>
            <person name="Winters P."/>
            <person name="Wipat A."/>
            <person name="Yamamoto H."/>
            <person name="Yamane K."/>
            <person name="Yasumoto K."/>
            <person name="Yata K."/>
            <person name="Yoshida K."/>
            <person name="Yoshikawa H.-F."/>
            <person name="Zumstein E."/>
            <person name="Yoshikawa H."/>
            <person name="Danchin A."/>
        </authorList>
    </citation>
    <scope>NUCLEOTIDE SEQUENCE [LARGE SCALE GENOMIC DNA]</scope>
    <source>
        <strain>168</strain>
    </source>
</reference>
<reference key="5">
    <citation type="journal article" date="1998" name="J. Bacteriol.">
        <title>MinCD proteins control the septation process during sporulation of Bacillus subtilis.</title>
        <authorList>
            <person name="Barak I."/>
            <person name="Prepiak P."/>
            <person name="Schmeisser F."/>
        </authorList>
    </citation>
    <scope>CHARACTERIZATION</scope>
</reference>
<protein>
    <recommendedName>
        <fullName>Septum site-determining protein MinC</fullName>
    </recommendedName>
</protein>
<accession>Q01463</accession>
<comment type="function">
    <text>Cell division inhibitor that blocks the formation of polar Z ring septums. Rapidly oscillates between the poles of the cell to destabilize FtsZ filaments that have formed before they mature into polar Z rings. Prevents FtsZ polymerization. The MinCD complex plays an important role in asymmetric septum formation during sporulation of B.subtilis cells.</text>
</comment>
<comment type="subunit">
    <text evidence="1">Interacts with MinD and FtsZ.</text>
</comment>
<comment type="interaction">
    <interactant intactId="EBI-9304968">
        <id>Q01463</id>
    </interactant>
    <interactant intactId="EBI-6502875">
        <id>Q01464</id>
        <label>minD</label>
    </interactant>
    <organismsDiffer>false</organismsDiffer>
    <experiments>3</experiments>
</comment>
<comment type="similarity">
    <text evidence="2">Belongs to the MinC family.</text>
</comment>
<sequence length="226" mass="24998">MKTKKQQYVTIKGTKNGLTLHLDDACSFDELLDGLQNMLSIEQYTDGKGQKISVHVKLGNRFLYKEQEEQLTELIASKKDLFVHSIDSEVITKKEAQQIREEAEIISVSKIVRSGQVLQVKGDLLLIGDVNPGGTVRAGGNIFVLGSLKGIAHAGFNGNNQAVIAASEMLPTQLRINHVLNRSPDHIQKGNEMECAYLDTDGNMVIERLQHLAHLRPDLTRLEGGM</sequence>
<organism>
    <name type="scientific">Bacillus subtilis (strain 168)</name>
    <dbReference type="NCBI Taxonomy" id="224308"/>
    <lineage>
        <taxon>Bacteria</taxon>
        <taxon>Bacillati</taxon>
        <taxon>Bacillota</taxon>
        <taxon>Bacilli</taxon>
        <taxon>Bacillales</taxon>
        <taxon>Bacillaceae</taxon>
        <taxon>Bacillus</taxon>
    </lineage>
</organism>
<gene>
    <name type="primary">minC</name>
    <name type="ordered locus">BSU28000</name>
</gene>